<evidence type="ECO:0000255" key="1">
    <source>
        <dbReference type="HAMAP-Rule" id="MF_00294"/>
    </source>
</evidence>
<evidence type="ECO:0000256" key="2">
    <source>
        <dbReference type="SAM" id="MobiDB-lite"/>
    </source>
</evidence>
<evidence type="ECO:0000305" key="3"/>
<name>RL33_PROMS</name>
<proteinExistence type="inferred from homology"/>
<organism>
    <name type="scientific">Prochlorococcus marinus (strain AS9601)</name>
    <dbReference type="NCBI Taxonomy" id="146891"/>
    <lineage>
        <taxon>Bacteria</taxon>
        <taxon>Bacillati</taxon>
        <taxon>Cyanobacteriota</taxon>
        <taxon>Cyanophyceae</taxon>
        <taxon>Synechococcales</taxon>
        <taxon>Prochlorococcaceae</taxon>
        <taxon>Prochlorococcus</taxon>
    </lineage>
</organism>
<comment type="similarity">
    <text evidence="1">Belongs to the bacterial ribosomal protein bL33 family.</text>
</comment>
<comment type="sequence caution" evidence="3">
    <conflict type="erroneous initiation">
        <sequence resource="EMBL-CDS" id="ABM70276"/>
    </conflict>
</comment>
<reference key="1">
    <citation type="journal article" date="2007" name="PLoS Genet.">
        <title>Patterns and implications of gene gain and loss in the evolution of Prochlorococcus.</title>
        <authorList>
            <person name="Kettler G.C."/>
            <person name="Martiny A.C."/>
            <person name="Huang K."/>
            <person name="Zucker J."/>
            <person name="Coleman M.L."/>
            <person name="Rodrigue S."/>
            <person name="Chen F."/>
            <person name="Lapidus A."/>
            <person name="Ferriera S."/>
            <person name="Johnson J."/>
            <person name="Steglich C."/>
            <person name="Church G.M."/>
            <person name="Richardson P."/>
            <person name="Chisholm S.W."/>
        </authorList>
    </citation>
    <scope>NUCLEOTIDE SEQUENCE [LARGE SCALE GENOMIC DNA]</scope>
    <source>
        <strain>AS9601</strain>
    </source>
</reference>
<accession>A2BR65</accession>
<sequence>MAKKGTRVVVTLECTEARTSTDPKRSNGVSRYTTEKNRRNTTERLELKKFNPHLNRMTIHKEIK</sequence>
<feature type="chain" id="PRO_0000356609" description="Large ribosomal subunit protein bL33">
    <location>
        <begin position="1"/>
        <end position="64"/>
    </location>
</feature>
<feature type="region of interest" description="Disordered" evidence="2">
    <location>
        <begin position="19"/>
        <end position="40"/>
    </location>
</feature>
<protein>
    <recommendedName>
        <fullName evidence="1">Large ribosomal subunit protein bL33</fullName>
    </recommendedName>
    <alternativeName>
        <fullName evidence="3">50S ribosomal protein L33</fullName>
    </alternativeName>
</protein>
<keyword id="KW-0687">Ribonucleoprotein</keyword>
<keyword id="KW-0689">Ribosomal protein</keyword>
<gene>
    <name evidence="1" type="primary">rpmG</name>
    <name evidence="1" type="synonym">rpl33</name>
    <name type="ordered locus">A9601_09921</name>
</gene>
<dbReference type="EMBL" id="CP000551">
    <property type="protein sequence ID" value="ABM70276.1"/>
    <property type="status" value="ALT_INIT"/>
    <property type="molecule type" value="Genomic_DNA"/>
</dbReference>
<dbReference type="RefSeq" id="WP_002805540.1">
    <property type="nucleotide sequence ID" value="NC_008816.1"/>
</dbReference>
<dbReference type="SMR" id="A2BR65"/>
<dbReference type="STRING" id="146891.A9601_09921"/>
<dbReference type="KEGG" id="pmb:A9601_09921"/>
<dbReference type="eggNOG" id="COG0267">
    <property type="taxonomic scope" value="Bacteria"/>
</dbReference>
<dbReference type="HOGENOM" id="CLU_190949_3_0_3"/>
<dbReference type="OrthoDB" id="9801333at2"/>
<dbReference type="Proteomes" id="UP000002590">
    <property type="component" value="Chromosome"/>
</dbReference>
<dbReference type="GO" id="GO:0005737">
    <property type="term" value="C:cytoplasm"/>
    <property type="evidence" value="ECO:0007669"/>
    <property type="project" value="UniProtKB-ARBA"/>
</dbReference>
<dbReference type="GO" id="GO:1990904">
    <property type="term" value="C:ribonucleoprotein complex"/>
    <property type="evidence" value="ECO:0007669"/>
    <property type="project" value="UniProtKB-KW"/>
</dbReference>
<dbReference type="GO" id="GO:0005840">
    <property type="term" value="C:ribosome"/>
    <property type="evidence" value="ECO:0007669"/>
    <property type="project" value="UniProtKB-KW"/>
</dbReference>
<dbReference type="GO" id="GO:0003735">
    <property type="term" value="F:structural constituent of ribosome"/>
    <property type="evidence" value="ECO:0007669"/>
    <property type="project" value="InterPro"/>
</dbReference>
<dbReference type="GO" id="GO:0006412">
    <property type="term" value="P:translation"/>
    <property type="evidence" value="ECO:0007669"/>
    <property type="project" value="UniProtKB-UniRule"/>
</dbReference>
<dbReference type="Gene3D" id="2.20.28.120">
    <property type="entry name" value="Ribosomal protein L33"/>
    <property type="match status" value="1"/>
</dbReference>
<dbReference type="HAMAP" id="MF_00294">
    <property type="entry name" value="Ribosomal_bL33"/>
    <property type="match status" value="1"/>
</dbReference>
<dbReference type="InterPro" id="IPR001705">
    <property type="entry name" value="Ribosomal_bL33"/>
</dbReference>
<dbReference type="InterPro" id="IPR038584">
    <property type="entry name" value="Ribosomal_bL33_sf"/>
</dbReference>
<dbReference type="InterPro" id="IPR011332">
    <property type="entry name" value="Ribosomal_zn-bd"/>
</dbReference>
<dbReference type="NCBIfam" id="NF001764">
    <property type="entry name" value="PRK00504.1"/>
    <property type="match status" value="1"/>
</dbReference>
<dbReference type="NCBIfam" id="NF001860">
    <property type="entry name" value="PRK00595.1"/>
    <property type="match status" value="1"/>
</dbReference>
<dbReference type="NCBIfam" id="TIGR01023">
    <property type="entry name" value="rpmG_bact"/>
    <property type="match status" value="1"/>
</dbReference>
<dbReference type="PANTHER" id="PTHR43168">
    <property type="entry name" value="50S RIBOSOMAL PROTEIN L33, CHLOROPLASTIC"/>
    <property type="match status" value="1"/>
</dbReference>
<dbReference type="PANTHER" id="PTHR43168:SF2">
    <property type="entry name" value="LARGE RIBOSOMAL SUBUNIT PROTEIN BL33C"/>
    <property type="match status" value="1"/>
</dbReference>
<dbReference type="Pfam" id="PF00471">
    <property type="entry name" value="Ribosomal_L33"/>
    <property type="match status" value="1"/>
</dbReference>
<dbReference type="SUPFAM" id="SSF57829">
    <property type="entry name" value="Zn-binding ribosomal proteins"/>
    <property type="match status" value="1"/>
</dbReference>